<dbReference type="EC" id="2.8.2.-"/>
<dbReference type="EMBL" id="Z46823">
    <property type="protein sequence ID" value="CAA86850.1"/>
    <property type="status" value="ALT_FRAME"/>
    <property type="molecule type" value="mRNA"/>
</dbReference>
<dbReference type="EMBL" id="AC006836">
    <property type="protein sequence ID" value="AAD20078.1"/>
    <property type="molecule type" value="Genomic_DNA"/>
</dbReference>
<dbReference type="EMBL" id="CP002685">
    <property type="protein sequence ID" value="AEC05746.1"/>
    <property type="molecule type" value="Genomic_DNA"/>
</dbReference>
<dbReference type="EMBL" id="AF375458">
    <property type="protein sequence ID" value="AAK53042.1"/>
    <property type="molecule type" value="mRNA"/>
</dbReference>
<dbReference type="EMBL" id="AY113050">
    <property type="protein sequence ID" value="AAM47358.1"/>
    <property type="molecule type" value="mRNA"/>
</dbReference>
<dbReference type="EMBL" id="Z23001">
    <property type="protein sequence ID" value="CAA80546.1"/>
    <property type="status" value="ALT_INIT"/>
    <property type="molecule type" value="mRNA"/>
</dbReference>
<dbReference type="PIR" id="A84452">
    <property type="entry name" value="A84452"/>
</dbReference>
<dbReference type="PIR" id="S69188">
    <property type="entry name" value="S69188"/>
</dbReference>
<dbReference type="RefSeq" id="NP_178471.1">
    <property type="nucleotide sequence ID" value="NM_126423.4"/>
</dbReference>
<dbReference type="PDB" id="1Q44">
    <property type="method" value="X-ray"/>
    <property type="resolution" value="1.90 A"/>
    <property type="chains" value="A=1-326"/>
</dbReference>
<dbReference type="PDB" id="2Q3M">
    <property type="method" value="X-ray"/>
    <property type="resolution" value="1.90 A"/>
    <property type="chains" value="A=1-326"/>
</dbReference>
<dbReference type="PDBsum" id="1Q44"/>
<dbReference type="PDBsum" id="2Q3M"/>
<dbReference type="SMR" id="P52839"/>
<dbReference type="BioGRID" id="304">
    <property type="interactions" value="2"/>
</dbReference>
<dbReference type="FunCoup" id="P52839">
    <property type="interactions" value="65"/>
</dbReference>
<dbReference type="STRING" id="3702.P52839"/>
<dbReference type="iPTMnet" id="P52839"/>
<dbReference type="PaxDb" id="3702-AT2G03760.1"/>
<dbReference type="ProteomicsDB" id="232602"/>
<dbReference type="DNASU" id="814903"/>
<dbReference type="EnsemblPlants" id="AT2G03760.1">
    <property type="protein sequence ID" value="AT2G03760.1"/>
    <property type="gene ID" value="AT2G03760"/>
</dbReference>
<dbReference type="GeneID" id="814903"/>
<dbReference type="Gramene" id="AT2G03760.1">
    <property type="protein sequence ID" value="AT2G03760.1"/>
    <property type="gene ID" value="AT2G03760"/>
</dbReference>
<dbReference type="KEGG" id="ath:AT2G03760"/>
<dbReference type="Araport" id="AT2G03760"/>
<dbReference type="TAIR" id="AT2G03760">
    <property type="gene designation" value="SOT12"/>
</dbReference>
<dbReference type="eggNOG" id="KOG1584">
    <property type="taxonomic scope" value="Eukaryota"/>
</dbReference>
<dbReference type="HOGENOM" id="CLU_027239_0_2_1"/>
<dbReference type="InParanoid" id="P52839"/>
<dbReference type="OMA" id="HILEYWY"/>
<dbReference type="OrthoDB" id="205623at2759"/>
<dbReference type="PhylomeDB" id="P52839"/>
<dbReference type="BioCyc" id="ARA:AT2G03760-MONOMER"/>
<dbReference type="BioCyc" id="MetaCyc:AT2G03760-MONOMER"/>
<dbReference type="BRENDA" id="2.8.2.2">
    <property type="organism ID" value="399"/>
</dbReference>
<dbReference type="SABIO-RK" id="P52839"/>
<dbReference type="EvolutionaryTrace" id="P52839"/>
<dbReference type="PRO" id="PR:P52839"/>
<dbReference type="Proteomes" id="UP000006548">
    <property type="component" value="Chromosome 2"/>
</dbReference>
<dbReference type="ExpressionAtlas" id="P52839">
    <property type="expression patterns" value="baseline and differential"/>
</dbReference>
<dbReference type="GO" id="GO:0005794">
    <property type="term" value="C:Golgi apparatus"/>
    <property type="evidence" value="ECO:0000314"/>
    <property type="project" value="TAIR"/>
</dbReference>
<dbReference type="GO" id="GO:0080118">
    <property type="term" value="F:brassinosteroid sulfotransferase activity"/>
    <property type="evidence" value="ECO:0000314"/>
    <property type="project" value="TAIR"/>
</dbReference>
<dbReference type="GO" id="GO:1990135">
    <property type="term" value="F:flavonoid sulfotransferase activity"/>
    <property type="evidence" value="ECO:0000314"/>
    <property type="project" value="TAIR"/>
</dbReference>
<dbReference type="GO" id="GO:0008146">
    <property type="term" value="F:sulfotransferase activity"/>
    <property type="evidence" value="ECO:0000314"/>
    <property type="project" value="TAIR"/>
</dbReference>
<dbReference type="GO" id="GO:0016131">
    <property type="term" value="P:brassinosteroid metabolic process"/>
    <property type="evidence" value="ECO:0000314"/>
    <property type="project" value="TAIR"/>
</dbReference>
<dbReference type="GO" id="GO:0006952">
    <property type="term" value="P:defense response"/>
    <property type="evidence" value="ECO:0000315"/>
    <property type="project" value="TAIR"/>
</dbReference>
<dbReference type="GO" id="GO:0009751">
    <property type="term" value="P:response to salicylic acid"/>
    <property type="evidence" value="ECO:0000315"/>
    <property type="project" value="TAIR"/>
</dbReference>
<dbReference type="GO" id="GO:0009651">
    <property type="term" value="P:response to salt stress"/>
    <property type="evidence" value="ECO:0000270"/>
    <property type="project" value="TAIR"/>
</dbReference>
<dbReference type="FunFam" id="3.40.50.300:FF:001258">
    <property type="entry name" value="Sulfotransferase"/>
    <property type="match status" value="1"/>
</dbReference>
<dbReference type="Gene3D" id="3.40.50.300">
    <property type="entry name" value="P-loop containing nucleotide triphosphate hydrolases"/>
    <property type="match status" value="1"/>
</dbReference>
<dbReference type="InterPro" id="IPR027417">
    <property type="entry name" value="P-loop_NTPase"/>
</dbReference>
<dbReference type="InterPro" id="IPR000863">
    <property type="entry name" value="Sulfotransferase_dom"/>
</dbReference>
<dbReference type="PANTHER" id="PTHR11783">
    <property type="entry name" value="SULFOTRANSFERASE SULT"/>
    <property type="match status" value="1"/>
</dbReference>
<dbReference type="Pfam" id="PF00685">
    <property type="entry name" value="Sulfotransfer_1"/>
    <property type="match status" value="1"/>
</dbReference>
<dbReference type="SUPFAM" id="SSF52540">
    <property type="entry name" value="P-loop containing nucleoside triphosphate hydrolases"/>
    <property type="match status" value="1"/>
</dbReference>
<evidence type="ECO:0000250" key="1"/>
<evidence type="ECO:0000269" key="2">
    <source>
    </source>
</evidence>
<evidence type="ECO:0000269" key="3">
    <source>
    </source>
</evidence>
<evidence type="ECO:0000269" key="4">
    <source>
    </source>
</evidence>
<evidence type="ECO:0000269" key="5">
    <source>
    </source>
</evidence>
<evidence type="ECO:0000305" key="6"/>
<evidence type="ECO:0000305" key="7">
    <source>
    </source>
</evidence>
<evidence type="ECO:0007829" key="8">
    <source>
        <dbReference type="PDB" id="1Q44"/>
    </source>
</evidence>
<proteinExistence type="evidence at protein level"/>
<organism>
    <name type="scientific">Arabidopsis thaliana</name>
    <name type="common">Mouse-ear cress</name>
    <dbReference type="NCBI Taxonomy" id="3702"/>
    <lineage>
        <taxon>Eukaryota</taxon>
        <taxon>Viridiplantae</taxon>
        <taxon>Streptophyta</taxon>
        <taxon>Embryophyta</taxon>
        <taxon>Tracheophyta</taxon>
        <taxon>Spermatophyta</taxon>
        <taxon>Magnoliopsida</taxon>
        <taxon>eudicotyledons</taxon>
        <taxon>Gunneridae</taxon>
        <taxon>Pentapetalae</taxon>
        <taxon>rosids</taxon>
        <taxon>malvids</taxon>
        <taxon>Brassicales</taxon>
        <taxon>Brassicaceae</taxon>
        <taxon>Camelineae</taxon>
        <taxon>Arabidopsis</taxon>
    </lineage>
</organism>
<gene>
    <name type="primary">SOT12</name>
    <name type="synonym">RAR047</name>
    <name type="synonym">ST1</name>
    <name type="ordered locus">At2g03760</name>
    <name type="ORF">F19B11.21</name>
</gene>
<reference key="1">
    <citation type="journal article" date="1996" name="Plant Mol. Biol.">
        <title>Molecular cloning of a sulfotransferase in Arabidopsis thaliana and regulation during development and in response to infection with pathogenic bacteria.</title>
        <authorList>
            <person name="Lacomme C."/>
            <person name="Roby D."/>
        </authorList>
    </citation>
    <scope>NUCLEOTIDE SEQUENCE [MRNA]</scope>
    <scope>INDUCTION BY PATHOGENS</scope>
    <scope>TISSUE SPECIFICITY</scope>
    <source>
        <strain>cv. Columbia</strain>
    </source>
</reference>
<reference key="2">
    <citation type="journal article" date="1999" name="Nature">
        <title>Sequence and analysis of chromosome 2 of the plant Arabidopsis thaliana.</title>
        <authorList>
            <person name="Lin X."/>
            <person name="Kaul S."/>
            <person name="Rounsley S.D."/>
            <person name="Shea T.P."/>
            <person name="Benito M.-I."/>
            <person name="Town C.D."/>
            <person name="Fujii C.Y."/>
            <person name="Mason T.M."/>
            <person name="Bowman C.L."/>
            <person name="Barnstead M.E."/>
            <person name="Feldblyum T.V."/>
            <person name="Buell C.R."/>
            <person name="Ketchum K.A."/>
            <person name="Lee J.J."/>
            <person name="Ronning C.M."/>
            <person name="Koo H.L."/>
            <person name="Moffat K.S."/>
            <person name="Cronin L.A."/>
            <person name="Shen M."/>
            <person name="Pai G."/>
            <person name="Van Aken S."/>
            <person name="Umayam L."/>
            <person name="Tallon L.J."/>
            <person name="Gill J.E."/>
            <person name="Adams M.D."/>
            <person name="Carrera A.J."/>
            <person name="Creasy T.H."/>
            <person name="Goodman H.M."/>
            <person name="Somerville C.R."/>
            <person name="Copenhaver G.P."/>
            <person name="Preuss D."/>
            <person name="Nierman W.C."/>
            <person name="White O."/>
            <person name="Eisen J.A."/>
            <person name="Salzberg S.L."/>
            <person name="Fraser C.M."/>
            <person name="Venter J.C."/>
        </authorList>
    </citation>
    <scope>NUCLEOTIDE SEQUENCE [LARGE SCALE GENOMIC DNA]</scope>
    <source>
        <strain>cv. Columbia</strain>
    </source>
</reference>
<reference key="3">
    <citation type="journal article" date="2017" name="Plant J.">
        <title>Araport11: a complete reannotation of the Arabidopsis thaliana reference genome.</title>
        <authorList>
            <person name="Cheng C.Y."/>
            <person name="Krishnakumar V."/>
            <person name="Chan A.P."/>
            <person name="Thibaud-Nissen F."/>
            <person name="Schobel S."/>
            <person name="Town C.D."/>
        </authorList>
    </citation>
    <scope>GENOME REANNOTATION</scope>
    <source>
        <strain>cv. Columbia</strain>
    </source>
</reference>
<reference key="4">
    <citation type="journal article" date="2003" name="Science">
        <title>Empirical analysis of transcriptional activity in the Arabidopsis genome.</title>
        <authorList>
            <person name="Yamada K."/>
            <person name="Lim J."/>
            <person name="Dale J.M."/>
            <person name="Chen H."/>
            <person name="Shinn P."/>
            <person name="Palm C.J."/>
            <person name="Southwick A.M."/>
            <person name="Wu H.C."/>
            <person name="Kim C.J."/>
            <person name="Nguyen M."/>
            <person name="Pham P.K."/>
            <person name="Cheuk R.F."/>
            <person name="Karlin-Newmann G."/>
            <person name="Liu S.X."/>
            <person name="Lam B."/>
            <person name="Sakano H."/>
            <person name="Wu T."/>
            <person name="Yu G."/>
            <person name="Miranda M."/>
            <person name="Quach H.L."/>
            <person name="Tripp M."/>
            <person name="Chang C.H."/>
            <person name="Lee J.M."/>
            <person name="Toriumi M.J."/>
            <person name="Chan M.M."/>
            <person name="Tang C.C."/>
            <person name="Onodera C.S."/>
            <person name="Deng J.M."/>
            <person name="Akiyama K."/>
            <person name="Ansari Y."/>
            <person name="Arakawa T."/>
            <person name="Banh J."/>
            <person name="Banno F."/>
            <person name="Bowser L."/>
            <person name="Brooks S.Y."/>
            <person name="Carninci P."/>
            <person name="Chao Q."/>
            <person name="Choy N."/>
            <person name="Enju A."/>
            <person name="Goldsmith A.D."/>
            <person name="Gurjal M."/>
            <person name="Hansen N.F."/>
            <person name="Hayashizaki Y."/>
            <person name="Johnson-Hopson C."/>
            <person name="Hsuan V.W."/>
            <person name="Iida K."/>
            <person name="Karnes M."/>
            <person name="Khan S."/>
            <person name="Koesema E."/>
            <person name="Ishida J."/>
            <person name="Jiang P.X."/>
            <person name="Jones T."/>
            <person name="Kawai J."/>
            <person name="Kamiya A."/>
            <person name="Meyers C."/>
            <person name="Nakajima M."/>
            <person name="Narusaka M."/>
            <person name="Seki M."/>
            <person name="Sakurai T."/>
            <person name="Satou M."/>
            <person name="Tamse R."/>
            <person name="Vaysberg M."/>
            <person name="Wallender E.K."/>
            <person name="Wong C."/>
            <person name="Yamamura Y."/>
            <person name="Yuan S."/>
            <person name="Shinozaki K."/>
            <person name="Davis R.W."/>
            <person name="Theologis A."/>
            <person name="Ecker J.R."/>
        </authorList>
    </citation>
    <scope>NUCLEOTIDE SEQUENCE [LARGE SCALE MRNA]</scope>
    <source>
        <strain>cv. Columbia</strain>
    </source>
</reference>
<reference key="5">
    <citation type="journal article" date="1996" name="Plant J.">
        <title>Further progress towards a catalogue of all Arabidopsis genes: analysis of a set of 5000 non-redundant ESTs.</title>
        <authorList>
            <person name="Cooke R."/>
            <person name="Raynal M."/>
            <person name="Laudie M."/>
            <person name="Grellet F."/>
            <person name="Delseny M."/>
            <person name="Morris P.-C."/>
            <person name="Guerrier D."/>
            <person name="Giraudat J."/>
            <person name="Quigley F."/>
            <person name="Clabault G."/>
            <person name="Li Y.-F."/>
            <person name="Mache R."/>
            <person name="Krivitzky M."/>
            <person name="Gy I.J.-J."/>
            <person name="Kreis M."/>
            <person name="Lecharny A."/>
            <person name="Parmentier Y."/>
            <person name="Marbach J."/>
            <person name="Fleck J."/>
            <person name="Clement B."/>
            <person name="Philipps G."/>
            <person name="Herve C."/>
            <person name="Bardet C."/>
            <person name="Tremousaygue D."/>
            <person name="Lescure B."/>
            <person name="Lacomme C."/>
            <person name="Roby D."/>
            <person name="Jourjon M.-F."/>
            <person name="Chabrier P."/>
            <person name="Charpenteau J.-L."/>
            <person name="Desprez T."/>
            <person name="Amselem J."/>
            <person name="Chiapello H."/>
            <person name="Hoefte H."/>
        </authorList>
    </citation>
    <scope>NUCLEOTIDE SEQUENCE [LARGE SCALE MRNA] OF 1-93</scope>
    <source>
        <strain>cv. Columbia</strain>
    </source>
</reference>
<reference key="6">
    <citation type="journal article" date="1997" name="FASEB J.">
        <title>Sulfation and sulfotransferases 6: Biochemistry and molecular biology of plant sulfotransferases.</title>
        <authorList>
            <person name="Varin L."/>
            <person name="Marsolais F."/>
            <person name="Richard M."/>
            <person name="Rouleau M."/>
        </authorList>
    </citation>
    <scope>INDUCTION</scope>
    <scope>TISSUE SPECIFICITY</scope>
</reference>
<reference key="7">
    <citation type="journal article" date="2004" name="J. Exp. Bot.">
        <title>The multi-protein family of Arabidopsis sulphotransferases and their relatives in other plant species.</title>
        <authorList>
            <person name="Klein M."/>
            <person name="Papenbrock J."/>
        </authorList>
    </citation>
    <scope>GENE FAMILY</scope>
    <scope>SUBCELLULAR LOCATION</scope>
    <scope>NOMENCLATURE</scope>
</reference>
<reference key="8">
    <citation type="journal article" date="2007" name="Planta">
        <title>Molecular and biochemical characterization of two brassinosteroid sulfotransferases from Arabidopsis, AtST4a (At2g14920) and AtST1 (At2g03760).</title>
        <authorList>
            <person name="Marsolais F."/>
            <person name="Boyd J."/>
            <person name="Paredes Y."/>
            <person name="Schinas A.M."/>
            <person name="Garcia M."/>
            <person name="Elzein S."/>
            <person name="Varin L."/>
        </authorList>
    </citation>
    <scope>FUNCTION</scope>
    <scope>CATALYTIC ACTIVITY</scope>
    <scope>BIOPHYSICOCHEMICAL PROPERTIES</scope>
    <source>
        <strain>cv. Columbia</strain>
    </source>
</reference>
<reference key="9">
    <citation type="journal article" date="2009" name="Proteins">
        <title>An unusually small dimer interface is observed in all available crystal structures of cytosolic sulfotransferases.</title>
        <authorList>
            <person name="Weitzner B."/>
            <person name="Meehan T."/>
            <person name="Xu Q."/>
            <person name="Dunbrack R.L. Jr."/>
        </authorList>
    </citation>
    <scope>SUBUNIT</scope>
</reference>
<reference key="10">
    <citation type="journal article" date="2010" name="Plant Cell Environ.">
        <title>A stress-inducible sulphotransferase sulphonates salicylic acid and confers pathogen resistance in Arabidopsis.</title>
        <authorList>
            <person name="Baek D."/>
            <person name="Pathange P."/>
            <person name="Chung J.S."/>
            <person name="Jiang J."/>
            <person name="Gao L."/>
            <person name="Oikawa A."/>
            <person name="Hirai M.Y."/>
            <person name="Saito K."/>
            <person name="Pare P.W."/>
            <person name="Shi H."/>
        </authorList>
    </citation>
    <scope>FUNCTION</scope>
    <scope>CATALYTIC ACTIVITY</scope>
    <scope>BIOPHYSICOCHEMICAL PROPERTIES</scope>
    <scope>TISSUE SPECIFICITY</scope>
    <scope>INDUCTION</scope>
    <scope>DISRUPTION PHENOTYPE</scope>
</reference>
<reference key="11">
    <citation type="journal article" date="2004" name="Proteins">
        <title>Crystal structure of At2g03760, a putative steroid sulfotransferase from Arabidopsis thaliana.</title>
        <authorList>
            <person name="Smith D.W."/>
            <person name="Johnson K.A."/>
            <person name="Bingman C.A."/>
            <person name="Aceti D.J."/>
            <person name="Blommel P.G."/>
            <person name="Wrobel R.L."/>
            <person name="Frederick R.O."/>
            <person name="Zhao Q."/>
            <person name="Sreenath H."/>
            <person name="Fox B.G."/>
            <person name="Volkman B.F."/>
            <person name="Jeon W.B."/>
            <person name="Newman C.S."/>
            <person name="Ulrich E.L."/>
            <person name="Hegeman A.D."/>
            <person name="Kimball T."/>
            <person name="Thao S."/>
            <person name="Sussman M.R."/>
            <person name="Markley J.L."/>
            <person name="Phillips G.N. Jr."/>
        </authorList>
    </citation>
    <scope>X-RAY CRYSTALLOGRAPHY (1.9 ANGSTROMS)</scope>
</reference>
<reference key="12">
    <citation type="journal article" date="2007" name="Structure">
        <title>Ensemble refinement of protein crystal structures: validation and application.</title>
        <authorList>
            <person name="Levin E.J."/>
            <person name="Kondrashov D.A."/>
            <person name="Wesenberg G.E."/>
            <person name="Phillips G.N. Jr."/>
        </authorList>
    </citation>
    <scope>X-RAY CRYSTALLOGRAPHY (1.90 ANGSTROMS)</scope>
</reference>
<comment type="function">
    <text evidence="2 3">Sulfotransferase that utilizes 3'-phospho-5'-adenylyl sulfate (PAPS) as sulfonate donor to catalyze the stereospecific sulfate conjugation of 24-epibrassinosteroids. Preferred substrates are 24-epicathasterone and 6-deoxo-24-epicathasterone. Low activity with 22-deoxy-24-epiteasterone. No activity with 24-epimers catasterone and brassinolide. Sulfonates salicylic acid. May be involved in detoxification. Enhances plant response to pathogen infection and contributes to long distance signaling in systemic acquired resistance (SAR).</text>
</comment>
<comment type="biophysicochemical properties">
    <kinetics>
        <KM evidence="2 3">6.9 uM for 24-epicathasterone</KM>
        <KM evidence="2 3">1.9 uM for 6-deoxo-24-epicathasterone</KM>
        <KM evidence="2 3">3 uM for 17-beta-estradiol</KM>
        <KM evidence="2 3">1.1 uM for dehydroepiandrosterone</KM>
        <KM evidence="2 3">13 uM for pregnenolone</KM>
        <KM evidence="2 3">0.44 mM for salicylic acid</KM>
        <KM evidence="2 3">3 uM for 3'-phospho-5'-adenylyl sulfate</KM>
        <Vmax evidence="2 3">57.0 pmol/sec/mg enzyme with 24-epicathasterone as substrate</Vmax>
        <Vmax evidence="2 3">4.4 pmol/sec/mg enzyme with 24-epicathasterone as substrate</Vmax>
        <Vmax evidence="2 3">1.6 pmol/sec/mg enzyme with 17-beta-estradiol as substrate</Vmax>
        <Vmax evidence="2 3">1.3 pmol/sec/mg enzyme with dehydroepiandrosterone as substrate</Vmax>
        <Vmax evidence="2 3">5.9 pmol/sec/mg enzyme with pregnenolone as substrate</Vmax>
        <Vmax evidence="2 3">2.67 pmol/sec/mg enzyme with salicylic acid as substrate</Vmax>
    </kinetics>
</comment>
<comment type="subunit">
    <text evidence="7">Dimer.</text>
</comment>
<comment type="subcellular location">
    <subcellularLocation>
        <location evidence="1">Cytoplasm</location>
    </subcellularLocation>
</comment>
<comment type="tissue specificity">
    <text evidence="3 4 5">Expressed in the aerial parts of seedlings, in roots, leaves and flowers. Not detected in stems and siliques.</text>
</comment>
<comment type="induction">
    <text evidence="3 4 5">Up-regulated by pathogens, methyljasmonate, salicylic acid, salt, osmotic stress, cold, auxin, cytokinin and abscisic acid treatments. Not induced by desiccation and ethylene treatment.</text>
</comment>
<comment type="disruption phenotype">
    <text evidence="3">Hypersensitivity to NaCl and ABA in seed germination, and to salicylic acid (SA) in seedling growth.</text>
</comment>
<comment type="similarity">
    <text evidence="6">Belongs to the sulfotransferase 1 family.</text>
</comment>
<comment type="sequence caution" evidence="6">
    <conflict type="erroneous initiation">
        <sequence resource="EMBL-CDS" id="CAA80546"/>
    </conflict>
    <text>Extended N-terminus.</text>
</comment>
<comment type="sequence caution" evidence="6">
    <conflict type="frameshift">
        <sequence resource="EMBL-CDS" id="CAA86850"/>
    </conflict>
</comment>
<protein>
    <recommendedName>
        <fullName>Cytosolic sulfotransferase 12</fullName>
        <shortName>AtSOT12</shortName>
        <ecNumber>2.8.2.-</ecNumber>
    </recommendedName>
    <alternativeName>
        <fullName>Sulfotransferase 1</fullName>
        <shortName>AtST1</shortName>
    </alternativeName>
</protein>
<name>SOT12_ARATH</name>
<feature type="chain" id="PRO_0000085181" description="Cytosolic sulfotransferase 12">
    <location>
        <begin position="1"/>
        <end position="326"/>
    </location>
</feature>
<feature type="active site" description="Proton acceptor" evidence="1">
    <location>
        <position position="140"/>
    </location>
</feature>
<feature type="binding site" evidence="1">
    <location>
        <begin position="75"/>
        <end position="80"/>
    </location>
    <ligand>
        <name>3'-phosphoadenylyl sulfate</name>
        <dbReference type="ChEBI" id="CHEBI:58339"/>
    </ligand>
</feature>
<feature type="binding site" evidence="1">
    <location>
        <position position="162"/>
    </location>
    <ligand>
        <name>3'-phosphoadenylyl sulfate</name>
        <dbReference type="ChEBI" id="CHEBI:58339"/>
    </ligand>
</feature>
<feature type="binding site" evidence="1">
    <location>
        <position position="170"/>
    </location>
    <ligand>
        <name>3'-phosphoadenylyl sulfate</name>
        <dbReference type="ChEBI" id="CHEBI:58339"/>
    </ligand>
</feature>
<feature type="binding site" evidence="1">
    <location>
        <position position="228"/>
    </location>
    <ligand>
        <name>3'-phosphoadenylyl sulfate</name>
        <dbReference type="ChEBI" id="CHEBI:58339"/>
    </ligand>
</feature>
<feature type="binding site" evidence="1">
    <location>
        <begin position="290"/>
        <end position="292"/>
    </location>
    <ligand>
        <name>3'-phosphoadenylyl sulfate</name>
        <dbReference type="ChEBI" id="CHEBI:58339"/>
    </ligand>
</feature>
<feature type="sequence conflict" description="In Ref. 5; CAA80546." evidence="6" ref="5">
    <original>VFALLNRHK</original>
    <variation>ALPSDTVPV</variation>
    <location>
        <begin position="85"/>
        <end position="93"/>
    </location>
</feature>
<feature type="helix" evidence="8">
    <location>
        <begin position="14"/>
        <end position="26"/>
    </location>
</feature>
<feature type="strand" evidence="8">
    <location>
        <begin position="29"/>
        <end position="31"/>
    </location>
</feature>
<feature type="strand" evidence="8">
    <location>
        <begin position="33"/>
        <end position="41"/>
    </location>
</feature>
<feature type="strand" evidence="8">
    <location>
        <begin position="44"/>
        <end position="46"/>
    </location>
</feature>
<feature type="helix" evidence="8">
    <location>
        <begin position="48"/>
        <end position="60"/>
    </location>
</feature>
<feature type="strand" evidence="8">
    <location>
        <begin position="68"/>
        <end position="71"/>
    </location>
</feature>
<feature type="helix" evidence="8">
    <location>
        <begin position="79"/>
        <end position="89"/>
    </location>
</feature>
<feature type="turn" evidence="8">
    <location>
        <begin position="90"/>
        <end position="95"/>
    </location>
</feature>
<feature type="helix" evidence="8">
    <location>
        <begin position="96"/>
        <end position="101"/>
    </location>
</feature>
<feature type="helix" evidence="8">
    <location>
        <begin position="103"/>
        <end position="106"/>
    </location>
</feature>
<feature type="helix" evidence="8">
    <location>
        <begin position="109"/>
        <end position="112"/>
    </location>
</feature>
<feature type="helix" evidence="8">
    <location>
        <begin position="116"/>
        <end position="122"/>
    </location>
</feature>
<feature type="helix" evidence="8">
    <location>
        <begin position="128"/>
        <end position="130"/>
    </location>
</feature>
<feature type="strand" evidence="8">
    <location>
        <begin position="136"/>
        <end position="139"/>
    </location>
</feature>
<feature type="helix" evidence="8">
    <location>
        <begin position="143"/>
        <end position="145"/>
    </location>
</feature>
<feature type="helix" evidence="8">
    <location>
        <begin position="148"/>
        <end position="152"/>
    </location>
</feature>
<feature type="strand" evidence="8">
    <location>
        <begin position="156"/>
        <end position="161"/>
    </location>
</feature>
<feature type="helix" evidence="8">
    <location>
        <begin position="164"/>
        <end position="177"/>
    </location>
</feature>
<feature type="helix" evidence="8">
    <location>
        <begin position="188"/>
        <end position="197"/>
    </location>
</feature>
<feature type="helix" evidence="8">
    <location>
        <begin position="205"/>
        <end position="218"/>
    </location>
</feature>
<feature type="turn" evidence="8">
    <location>
        <begin position="220"/>
        <end position="222"/>
    </location>
</feature>
<feature type="strand" evidence="8">
    <location>
        <begin position="223"/>
        <end position="227"/>
    </location>
</feature>
<feature type="helix" evidence="8">
    <location>
        <begin position="228"/>
        <end position="233"/>
    </location>
</feature>
<feature type="helix" evidence="8">
    <location>
        <begin position="235"/>
        <end position="246"/>
    </location>
</feature>
<feature type="helix" evidence="8">
    <location>
        <begin position="253"/>
        <end position="263"/>
    </location>
</feature>
<feature type="helix" evidence="8">
    <location>
        <begin position="297"/>
        <end position="300"/>
    </location>
</feature>
<feature type="helix" evidence="8">
    <location>
        <begin position="303"/>
        <end position="316"/>
    </location>
</feature>
<feature type="turn" evidence="8">
    <location>
        <begin position="317"/>
        <end position="319"/>
    </location>
</feature>
<accession>P52839</accession>
<accession>Q9SJW2</accession>
<sequence length="326" mass="37139">MSSSSSVPAYLGDEDLTQETRALISSLPKEKGWLVSEIYEFQGLWHTQAILQGILICQKRFEAKDSDIILVTNPKSGTTWLKALVFALLNRHKFPVSSSGNHPLLVTNPHLLVPFLEGVYYESPDFDFSSLPSPRLMNTHISHLSLPESVKSSSCKIVYCCRNPKDMFVSLWHFGKKLAPEETADYPIEKAVEAFCEGKFIGGPFWDHILEYWYASRENPNKVLFVTYEELKKQTEVEMKRIAEFLECGFIEEEEVREIVKLCSFESLSNLEVNKEGKLPNGIETKTFFRKGEIGGWRDTLSESLAEEIDRTIEEKFKGSGLKFSS</sequence>
<keyword id="KW-0002">3D-structure</keyword>
<keyword id="KW-0963">Cytoplasm</keyword>
<keyword id="KW-1185">Reference proteome</keyword>
<keyword id="KW-0808">Transferase</keyword>